<reference key="1">
    <citation type="journal article" date="2002" name="Fungal Genet. Biol.">
        <title>Regulation by carbon and nitrogen sources of a family of cellulases in Aspergillus nidulans.</title>
        <authorList>
            <person name="Lockington R.A."/>
            <person name="Rodbourn L."/>
            <person name="Barnett S."/>
            <person name="Carter C.J."/>
            <person name="Kelly J.M."/>
        </authorList>
    </citation>
    <scope>NUCLEOTIDE SEQUENCE [GENOMIC DNA]</scope>
</reference>
<reference key="2">
    <citation type="journal article" date="2005" name="Nature">
        <title>Sequencing of Aspergillus nidulans and comparative analysis with A. fumigatus and A. oryzae.</title>
        <authorList>
            <person name="Galagan J.E."/>
            <person name="Calvo S.E."/>
            <person name="Cuomo C."/>
            <person name="Ma L.-J."/>
            <person name="Wortman J.R."/>
            <person name="Batzoglou S."/>
            <person name="Lee S.-I."/>
            <person name="Bastuerkmen M."/>
            <person name="Spevak C.C."/>
            <person name="Clutterbuck J."/>
            <person name="Kapitonov V."/>
            <person name="Jurka J."/>
            <person name="Scazzocchio C."/>
            <person name="Farman M.L."/>
            <person name="Butler J."/>
            <person name="Purcell S."/>
            <person name="Harris S."/>
            <person name="Braus G.H."/>
            <person name="Draht O."/>
            <person name="Busch S."/>
            <person name="D'Enfert C."/>
            <person name="Bouchier C."/>
            <person name="Goldman G.H."/>
            <person name="Bell-Pedersen D."/>
            <person name="Griffiths-Jones S."/>
            <person name="Doonan J.H."/>
            <person name="Yu J."/>
            <person name="Vienken K."/>
            <person name="Pain A."/>
            <person name="Freitag M."/>
            <person name="Selker E.U."/>
            <person name="Archer D.B."/>
            <person name="Penalva M.A."/>
            <person name="Oakley B.R."/>
            <person name="Momany M."/>
            <person name="Tanaka T."/>
            <person name="Kumagai T."/>
            <person name="Asai K."/>
            <person name="Machida M."/>
            <person name="Nierman W.C."/>
            <person name="Denning D.W."/>
            <person name="Caddick M.X."/>
            <person name="Hynes M."/>
            <person name="Paoletti M."/>
            <person name="Fischer R."/>
            <person name="Miller B.L."/>
            <person name="Dyer P.S."/>
            <person name="Sachs M.S."/>
            <person name="Osmani S.A."/>
            <person name="Birren B.W."/>
        </authorList>
    </citation>
    <scope>NUCLEOTIDE SEQUENCE [LARGE SCALE GENOMIC DNA]</scope>
    <source>
        <strain>FGSC A4 / ATCC 38163 / CBS 112.46 / NRRL 194 / M139</strain>
    </source>
</reference>
<reference key="3">
    <citation type="journal article" date="2009" name="Fungal Genet. Biol.">
        <title>The 2008 update of the Aspergillus nidulans genome annotation: a community effort.</title>
        <authorList>
            <person name="Wortman J.R."/>
            <person name="Gilsenan J.M."/>
            <person name="Joardar V."/>
            <person name="Deegan J."/>
            <person name="Clutterbuck J."/>
            <person name="Andersen M.R."/>
            <person name="Archer D."/>
            <person name="Bencina M."/>
            <person name="Braus G."/>
            <person name="Coutinho P."/>
            <person name="von Dohren H."/>
            <person name="Doonan J."/>
            <person name="Driessen A.J."/>
            <person name="Durek P."/>
            <person name="Espeso E."/>
            <person name="Fekete E."/>
            <person name="Flipphi M."/>
            <person name="Estrada C.G."/>
            <person name="Geysens S."/>
            <person name="Goldman G."/>
            <person name="de Groot P.W."/>
            <person name="Hansen K."/>
            <person name="Harris S.D."/>
            <person name="Heinekamp T."/>
            <person name="Helmstaedt K."/>
            <person name="Henrissat B."/>
            <person name="Hofmann G."/>
            <person name="Homan T."/>
            <person name="Horio T."/>
            <person name="Horiuchi H."/>
            <person name="James S."/>
            <person name="Jones M."/>
            <person name="Karaffa L."/>
            <person name="Karanyi Z."/>
            <person name="Kato M."/>
            <person name="Keller N."/>
            <person name="Kelly D.E."/>
            <person name="Kiel J.A."/>
            <person name="Kim J.M."/>
            <person name="van der Klei I.J."/>
            <person name="Klis F.M."/>
            <person name="Kovalchuk A."/>
            <person name="Krasevec N."/>
            <person name="Kubicek C.P."/>
            <person name="Liu B."/>
            <person name="Maccabe A."/>
            <person name="Meyer V."/>
            <person name="Mirabito P."/>
            <person name="Miskei M."/>
            <person name="Mos M."/>
            <person name="Mullins J."/>
            <person name="Nelson D.R."/>
            <person name="Nielsen J."/>
            <person name="Oakley B.R."/>
            <person name="Osmani S.A."/>
            <person name="Pakula T."/>
            <person name="Paszewski A."/>
            <person name="Paulsen I."/>
            <person name="Pilsyk S."/>
            <person name="Pocsi I."/>
            <person name="Punt P.J."/>
            <person name="Ram A.F."/>
            <person name="Ren Q."/>
            <person name="Robellet X."/>
            <person name="Robson G."/>
            <person name="Seiboth B."/>
            <person name="van Solingen P."/>
            <person name="Specht T."/>
            <person name="Sun J."/>
            <person name="Taheri-Talesh N."/>
            <person name="Takeshita N."/>
            <person name="Ussery D."/>
            <person name="vanKuyk P.A."/>
            <person name="Visser H."/>
            <person name="van de Vondervoort P.J."/>
            <person name="de Vries R.P."/>
            <person name="Walton J."/>
            <person name="Xiang X."/>
            <person name="Xiong Y."/>
            <person name="Zeng A.P."/>
            <person name="Brandt B.W."/>
            <person name="Cornell M.J."/>
            <person name="van den Hondel C.A."/>
            <person name="Visser J."/>
            <person name="Oliver S.G."/>
            <person name="Turner G."/>
        </authorList>
    </citation>
    <scope>GENOME REANNOTATION</scope>
    <source>
        <strain>FGSC A4 / ATCC 38163 / CBS 112.46 / NRRL 194 / M139</strain>
    </source>
</reference>
<reference key="4">
    <citation type="journal article" date="2006" name="Proc. Natl. Acad. Sci. U.S.A.">
        <title>Development and application of a suite of polysaccharide-degrading enzymes for analyzing plant cell walls.</title>
        <authorList>
            <person name="Bauer S."/>
            <person name="Vasu P."/>
            <person name="Persson S."/>
            <person name="Mort A.J."/>
            <person name="Somerville C.R."/>
        </authorList>
    </citation>
    <scope>FUNCTION</scope>
</reference>
<keyword id="KW-0119">Carbohydrate metabolism</keyword>
<keyword id="KW-0136">Cellulose degradation</keyword>
<keyword id="KW-1015">Disulfide bond</keyword>
<keyword id="KW-0325">Glycoprotein</keyword>
<keyword id="KW-0326">Glycosidase</keyword>
<keyword id="KW-0378">Hydrolase</keyword>
<keyword id="KW-0624">Polysaccharide degradation</keyword>
<keyword id="KW-1185">Reference proteome</keyword>
<keyword id="KW-0964">Secreted</keyword>
<keyword id="KW-0732">Signal</keyword>
<gene>
    <name type="primary">cbhB</name>
    <name type="ORF">AN0494</name>
</gene>
<comment type="function">
    <text evidence="1 5">The biological conversion of cellulose to glucose generally requires three types of hydrolytic enzymes: (1) Endoglucanases which cut internal beta-1,4-glucosidic bonds; (2) Exocellobiohydrolases that cut the disaccharide cellobiose from the non-reducing end of the cellulose polymer chain; (3) Beta-1,4-glucosidases which hydrolyze the cellobiose and other short cello-oligosaccharides to glucose.</text>
</comment>
<comment type="catalytic activity">
    <reaction>
        <text>Hydrolysis of (1-&gt;4)-beta-D-glucosidic linkages in cellulose and cellotetraose, releasing cellobiose from the non-reducing ends of the chains.</text>
        <dbReference type="EC" id="3.2.1.91"/>
    </reaction>
</comment>
<comment type="subcellular location">
    <subcellularLocation>
        <location evidence="6">Secreted</location>
    </subcellularLocation>
</comment>
<comment type="similarity">
    <text evidence="6">Belongs to the glycosyl hydrolase 7 (cellulase C) family.</text>
</comment>
<organism>
    <name type="scientific">Emericella nidulans (strain FGSC A4 / ATCC 38163 / CBS 112.46 / NRRL 194 / M139)</name>
    <name type="common">Aspergillus nidulans</name>
    <dbReference type="NCBI Taxonomy" id="227321"/>
    <lineage>
        <taxon>Eukaryota</taxon>
        <taxon>Fungi</taxon>
        <taxon>Dikarya</taxon>
        <taxon>Ascomycota</taxon>
        <taxon>Pezizomycotina</taxon>
        <taxon>Eurotiomycetes</taxon>
        <taxon>Eurotiomycetidae</taxon>
        <taxon>Eurotiales</taxon>
        <taxon>Aspergillaceae</taxon>
        <taxon>Aspergillus</taxon>
        <taxon>Aspergillus subgen. Nidulantes</taxon>
    </lineage>
</organism>
<sequence>MASSFQLYKALLFFSSLLSAVQAQKVGTQQAEVHPGLTWQTCTSSGSCTTVNGEVTIDANWRWLHTVNGYTNCYTGNEWDTSICTSNEVCAEQCAVDGANYASTYGITTSGSSLRLNFVTQSQQKNIGSRVYLMDDEDTYTMFYLLNKEFTFDVDVSELPCGLNGAVYFVSMDADGGKSRYATNEAGAKYGTGYCDSQCPRDLKFINGVANVEGWESSDTNPNGGVGNHGSCCAEMDIWEANSISTAFTPHPCDTPGQTLCTGDSCGGTYSNDRYGGTCDPDGCDFNSYRQGNKTFYGPGLTVDTNSPVTVVTQFLTDDNTDTGTLSEIKRFYVQNGVVIPNSESTYPANPGNSITTEFCESQKELFGDVDVFSAHGGMAGMGAALEQGMVLVLSLWDDNYSNMLWLDSNYPTDADPTQPGIARGTCPTDSGVPSEVEAQYPNAYVVYSNIKFGPIGSTFGNGGGSGPTTTVTTSTATSTTSSATSTATGQAQHWEQCGGNGWTGPTVCASPWACTVVNSWYSQCL</sequence>
<accession>Q8NK02</accession>
<accession>C8VSY4</accession>
<accession>Q5BG36</accession>
<name>CBHB_EMENI</name>
<evidence type="ECO:0000250" key="1"/>
<evidence type="ECO:0000255" key="2"/>
<evidence type="ECO:0000255" key="3">
    <source>
        <dbReference type="PROSITE-ProRule" id="PRU00597"/>
    </source>
</evidence>
<evidence type="ECO:0000256" key="4">
    <source>
        <dbReference type="SAM" id="MobiDB-lite"/>
    </source>
</evidence>
<evidence type="ECO:0000269" key="5">
    <source>
    </source>
</evidence>
<evidence type="ECO:0000305" key="6"/>
<feature type="signal peptide" evidence="2">
    <location>
        <begin position="1"/>
        <end position="23"/>
    </location>
</feature>
<feature type="chain" id="PRO_0000393550" description="1,4-beta-D-glucan cellobiohydrolase B">
    <location>
        <begin position="24"/>
        <end position="526"/>
    </location>
</feature>
<feature type="domain" description="CBM1" evidence="3">
    <location>
        <begin position="490"/>
        <end position="526"/>
    </location>
</feature>
<feature type="region of interest" description="Catalytic">
    <location>
        <begin position="24"/>
        <end position="458"/>
    </location>
</feature>
<feature type="region of interest" description="Ser/Thr-rich linker">
    <location>
        <begin position="459"/>
        <end position="490"/>
    </location>
</feature>
<feature type="region of interest" description="Disordered" evidence="4">
    <location>
        <begin position="464"/>
        <end position="488"/>
    </location>
</feature>
<feature type="compositionally biased region" description="Low complexity" evidence="4">
    <location>
        <begin position="468"/>
        <end position="488"/>
    </location>
</feature>
<feature type="active site" description="Nucleophile" evidence="1">
    <location>
        <position position="235"/>
    </location>
</feature>
<feature type="active site" description="Proton donor" evidence="1">
    <location>
        <position position="240"/>
    </location>
</feature>
<feature type="glycosylation site" description="N-linked (GlcNAc...) asparagine" evidence="2">
    <location>
        <position position="293"/>
    </location>
</feature>
<feature type="glycosylation site" description="N-linked (GlcNAc...) asparagine" evidence="2">
    <location>
        <position position="400"/>
    </location>
</feature>
<feature type="disulfide bond" evidence="1">
    <location>
        <begin position="498"/>
        <end position="515"/>
    </location>
</feature>
<feature type="disulfide bond" evidence="1">
    <location>
        <begin position="509"/>
        <end position="525"/>
    </location>
</feature>
<proteinExistence type="inferred from homology"/>
<protein>
    <recommendedName>
        <fullName>1,4-beta-D-glucan cellobiohydrolase B</fullName>
        <ecNumber>3.2.1.91</ecNumber>
    </recommendedName>
    <alternativeName>
        <fullName>Beta-glucancellobiohydrolase B</fullName>
    </alternativeName>
    <alternativeName>
        <fullName>Exocellobiohydrolase B</fullName>
    </alternativeName>
    <alternativeName>
        <fullName>Exoglucanase B</fullName>
    </alternativeName>
</protein>
<dbReference type="EC" id="3.2.1.91"/>
<dbReference type="EMBL" id="AF420020">
    <property type="protein sequence ID" value="AAM54070.1"/>
    <property type="molecule type" value="Genomic_DNA"/>
</dbReference>
<dbReference type="EMBL" id="AACD01000007">
    <property type="protein sequence ID" value="EAA66593.1"/>
    <property type="molecule type" value="Genomic_DNA"/>
</dbReference>
<dbReference type="EMBL" id="BN001308">
    <property type="protein sequence ID" value="CBF89371.1"/>
    <property type="molecule type" value="Genomic_DNA"/>
</dbReference>
<dbReference type="RefSeq" id="XP_658098.1">
    <property type="nucleotide sequence ID" value="XM_653006.1"/>
</dbReference>
<dbReference type="SMR" id="Q8NK02"/>
<dbReference type="STRING" id="227321.Q8NK02"/>
<dbReference type="CAZy" id="CBM1">
    <property type="family name" value="Carbohydrate-Binding Module Family 1"/>
</dbReference>
<dbReference type="CAZy" id="GH7">
    <property type="family name" value="Glycoside Hydrolase Family 7"/>
</dbReference>
<dbReference type="GlyCosmos" id="Q8NK02">
    <property type="glycosylation" value="2 sites, No reported glycans"/>
</dbReference>
<dbReference type="EnsemblFungi" id="CBF89371">
    <property type="protein sequence ID" value="CBF89371"/>
    <property type="gene ID" value="ANIA_00494"/>
</dbReference>
<dbReference type="KEGG" id="ani:ANIA_00494"/>
<dbReference type="eggNOG" id="ENOG502QPHV">
    <property type="taxonomic scope" value="Eukaryota"/>
</dbReference>
<dbReference type="HOGENOM" id="CLU_020817_3_2_1"/>
<dbReference type="InParanoid" id="Q8NK02"/>
<dbReference type="OMA" id="CGFNGAL"/>
<dbReference type="OrthoDB" id="412382at2759"/>
<dbReference type="BRENDA" id="3.2.1.91">
    <property type="organism ID" value="517"/>
</dbReference>
<dbReference type="Proteomes" id="UP000000560">
    <property type="component" value="Chromosome VIII"/>
</dbReference>
<dbReference type="GO" id="GO:0005576">
    <property type="term" value="C:extracellular region"/>
    <property type="evidence" value="ECO:0007669"/>
    <property type="project" value="UniProtKB-SubCell"/>
</dbReference>
<dbReference type="GO" id="GO:0016162">
    <property type="term" value="F:cellulose 1,4-beta-cellobiosidase activity"/>
    <property type="evidence" value="ECO:0000314"/>
    <property type="project" value="UniProtKB"/>
</dbReference>
<dbReference type="GO" id="GO:0030248">
    <property type="term" value="F:cellulose binding"/>
    <property type="evidence" value="ECO:0007669"/>
    <property type="project" value="InterPro"/>
</dbReference>
<dbReference type="GO" id="GO:0030245">
    <property type="term" value="P:cellulose catabolic process"/>
    <property type="evidence" value="ECO:0007669"/>
    <property type="project" value="UniProtKB-KW"/>
</dbReference>
<dbReference type="GO" id="GO:0009251">
    <property type="term" value="P:glucan catabolic process"/>
    <property type="evidence" value="ECO:0000314"/>
    <property type="project" value="UniProtKB"/>
</dbReference>
<dbReference type="CDD" id="cd07999">
    <property type="entry name" value="GH7_CBH_EG"/>
    <property type="match status" value="1"/>
</dbReference>
<dbReference type="FunFam" id="2.70.100.10:FF:000001">
    <property type="entry name" value="Glucanase"/>
    <property type="match status" value="1"/>
</dbReference>
<dbReference type="Gene3D" id="2.70.100.10">
    <property type="entry name" value="Glycoside hydrolase, family 7, domain"/>
    <property type="match status" value="1"/>
</dbReference>
<dbReference type="InterPro" id="IPR035971">
    <property type="entry name" value="CBD_sf"/>
</dbReference>
<dbReference type="InterPro" id="IPR000254">
    <property type="entry name" value="Cellulose-bd_dom_fun"/>
</dbReference>
<dbReference type="InterPro" id="IPR013320">
    <property type="entry name" value="ConA-like_dom_sf"/>
</dbReference>
<dbReference type="InterPro" id="IPR001722">
    <property type="entry name" value="Glyco_hydro_7"/>
</dbReference>
<dbReference type="InterPro" id="IPR037019">
    <property type="entry name" value="Glyco_hydro_7_sf"/>
</dbReference>
<dbReference type="PANTHER" id="PTHR33753">
    <property type="entry name" value="1,4-BETA-D-GLUCAN CELLOBIOHYDROLASE B"/>
    <property type="match status" value="1"/>
</dbReference>
<dbReference type="PANTHER" id="PTHR33753:SF2">
    <property type="entry name" value="GLYCOSIDE HYDROLASE FAMILY 7 PROTEIN"/>
    <property type="match status" value="1"/>
</dbReference>
<dbReference type="Pfam" id="PF00734">
    <property type="entry name" value="CBM_1"/>
    <property type="match status" value="1"/>
</dbReference>
<dbReference type="Pfam" id="PF00840">
    <property type="entry name" value="Glyco_hydro_7"/>
    <property type="match status" value="1"/>
</dbReference>
<dbReference type="PRINTS" id="PR00734">
    <property type="entry name" value="GLHYDRLASE7"/>
</dbReference>
<dbReference type="SMART" id="SM00236">
    <property type="entry name" value="fCBD"/>
    <property type="match status" value="1"/>
</dbReference>
<dbReference type="SUPFAM" id="SSF57180">
    <property type="entry name" value="Cellulose-binding domain"/>
    <property type="match status" value="1"/>
</dbReference>
<dbReference type="SUPFAM" id="SSF49899">
    <property type="entry name" value="Concanavalin A-like lectins/glucanases"/>
    <property type="match status" value="1"/>
</dbReference>
<dbReference type="PROSITE" id="PS00562">
    <property type="entry name" value="CBM1_1"/>
    <property type="match status" value="1"/>
</dbReference>
<dbReference type="PROSITE" id="PS51164">
    <property type="entry name" value="CBM1_2"/>
    <property type="match status" value="1"/>
</dbReference>